<evidence type="ECO:0000255" key="1">
    <source>
        <dbReference type="HAMAP-Rule" id="MF_00686"/>
    </source>
</evidence>
<dbReference type="EMBL" id="CP001011">
    <property type="protein sequence ID" value="ACB92370.1"/>
    <property type="molecule type" value="Genomic_DNA"/>
</dbReference>
<dbReference type="RefSeq" id="WP_011097829.1">
    <property type="nucleotide sequence ID" value="NC_010577.1"/>
</dbReference>
<dbReference type="SMR" id="B2I4S5"/>
<dbReference type="KEGG" id="xfn:XfasM23_0938"/>
<dbReference type="HOGENOM" id="CLU_170994_0_0_6"/>
<dbReference type="Proteomes" id="UP000001698">
    <property type="component" value="Chromosome"/>
</dbReference>
<dbReference type="GO" id="GO:0005829">
    <property type="term" value="C:cytosol"/>
    <property type="evidence" value="ECO:0007669"/>
    <property type="project" value="TreeGrafter"/>
</dbReference>
<dbReference type="GO" id="GO:0005506">
    <property type="term" value="F:iron ion binding"/>
    <property type="evidence" value="ECO:0007669"/>
    <property type="project" value="UniProtKB-UniRule"/>
</dbReference>
<dbReference type="GO" id="GO:0034599">
    <property type="term" value="P:cellular response to oxidative stress"/>
    <property type="evidence" value="ECO:0007669"/>
    <property type="project" value="TreeGrafter"/>
</dbReference>
<dbReference type="FunFam" id="1.10.3880.10:FF:000001">
    <property type="entry name" value="Probable Fe(2+)-trafficking protein"/>
    <property type="match status" value="1"/>
</dbReference>
<dbReference type="Gene3D" id="1.10.3880.10">
    <property type="entry name" value="Fe(II) trafficking protein YggX"/>
    <property type="match status" value="1"/>
</dbReference>
<dbReference type="HAMAP" id="MF_00686">
    <property type="entry name" value="Fe_traffic_YggX"/>
    <property type="match status" value="1"/>
</dbReference>
<dbReference type="InterPro" id="IPR007457">
    <property type="entry name" value="Fe_traffick_prot_YggX"/>
</dbReference>
<dbReference type="InterPro" id="IPR036766">
    <property type="entry name" value="Fe_traffick_prot_YggX_sf"/>
</dbReference>
<dbReference type="NCBIfam" id="NF003817">
    <property type="entry name" value="PRK05408.1"/>
    <property type="match status" value="1"/>
</dbReference>
<dbReference type="PANTHER" id="PTHR36965">
    <property type="entry name" value="FE(2+)-TRAFFICKING PROTEIN-RELATED"/>
    <property type="match status" value="1"/>
</dbReference>
<dbReference type="PANTHER" id="PTHR36965:SF1">
    <property type="entry name" value="FE(2+)-TRAFFICKING PROTEIN-RELATED"/>
    <property type="match status" value="1"/>
</dbReference>
<dbReference type="Pfam" id="PF04362">
    <property type="entry name" value="Iron_traffic"/>
    <property type="match status" value="1"/>
</dbReference>
<dbReference type="PIRSF" id="PIRSF029827">
    <property type="entry name" value="Fe_traffic_YggX"/>
    <property type="match status" value="1"/>
</dbReference>
<dbReference type="SUPFAM" id="SSF111148">
    <property type="entry name" value="YggX-like"/>
    <property type="match status" value="1"/>
</dbReference>
<comment type="function">
    <text evidence="1">Could be a mediator in iron transactions between iron acquisition and iron-requiring processes, such as synthesis and/or repair of Fe-S clusters in biosynthetic enzymes.</text>
</comment>
<comment type="similarity">
    <text evidence="1">Belongs to the Fe(2+)-trafficking protein family.</text>
</comment>
<accession>B2I4S5</accession>
<sequence>MQRIIFCEYEKRDTEGLDFVPYPGELGQKIFACIGKVGWAAWLAHQTMLINENRLSPRNPSHRAFLEEELNKFLFERSAAKPEGYIEPDA</sequence>
<organism>
    <name type="scientific">Xylella fastidiosa (strain M23)</name>
    <dbReference type="NCBI Taxonomy" id="405441"/>
    <lineage>
        <taxon>Bacteria</taxon>
        <taxon>Pseudomonadati</taxon>
        <taxon>Pseudomonadota</taxon>
        <taxon>Gammaproteobacteria</taxon>
        <taxon>Lysobacterales</taxon>
        <taxon>Lysobacteraceae</taxon>
        <taxon>Xylella</taxon>
    </lineage>
</organism>
<keyword id="KW-0408">Iron</keyword>
<name>FETP_XYLF2</name>
<gene>
    <name type="ordered locus">XfasM23_0938</name>
</gene>
<feature type="chain" id="PRO_1000131872" description="Probable Fe(2+)-trafficking protein">
    <location>
        <begin position="1"/>
        <end position="90"/>
    </location>
</feature>
<protein>
    <recommendedName>
        <fullName evidence="1">Probable Fe(2+)-trafficking protein</fullName>
    </recommendedName>
</protein>
<proteinExistence type="inferred from homology"/>
<reference key="1">
    <citation type="journal article" date="2010" name="J. Bacteriol.">
        <title>Whole genome sequences of two Xylella fastidiosa strains (M12 and M23) causing almond leaf scorch disease in California.</title>
        <authorList>
            <person name="Chen J."/>
            <person name="Xie G."/>
            <person name="Han S."/>
            <person name="Chertkov O."/>
            <person name="Sims D."/>
            <person name="Civerolo E.L."/>
        </authorList>
    </citation>
    <scope>NUCLEOTIDE SEQUENCE [LARGE SCALE GENOMIC DNA]</scope>
    <source>
        <strain>M23</strain>
    </source>
</reference>